<feature type="chain" id="PRO_0000281718" description="ATP-dependent RNA helicase dbp9">
    <location>
        <begin position="1"/>
        <end position="616"/>
    </location>
</feature>
<feature type="domain" description="Helicase ATP-binding" evidence="2">
    <location>
        <begin position="58"/>
        <end position="236"/>
    </location>
</feature>
<feature type="domain" description="Helicase C-terminal" evidence="3">
    <location>
        <begin position="247"/>
        <end position="481"/>
    </location>
</feature>
<feature type="region of interest" description="Disordered" evidence="4">
    <location>
        <begin position="1"/>
        <end position="29"/>
    </location>
</feature>
<feature type="region of interest" description="Disordered" evidence="4">
    <location>
        <begin position="340"/>
        <end position="385"/>
    </location>
</feature>
<feature type="region of interest" description="Disordered" evidence="4">
    <location>
        <begin position="579"/>
        <end position="616"/>
    </location>
</feature>
<feature type="short sequence motif" description="Q motif">
    <location>
        <begin position="27"/>
        <end position="55"/>
    </location>
</feature>
<feature type="short sequence motif" description="DEAD box">
    <location>
        <begin position="184"/>
        <end position="187"/>
    </location>
</feature>
<feature type="compositionally biased region" description="Basic residues" evidence="4">
    <location>
        <begin position="584"/>
        <end position="601"/>
    </location>
</feature>
<feature type="binding site" evidence="2">
    <location>
        <begin position="71"/>
        <end position="78"/>
    </location>
    <ligand>
        <name>ATP</name>
        <dbReference type="ChEBI" id="CHEBI:30616"/>
    </ligand>
</feature>
<organism>
    <name type="scientific">Aspergillus niger (strain ATCC MYA-4892 / CBS 513.88 / FGSC A1513)</name>
    <dbReference type="NCBI Taxonomy" id="425011"/>
    <lineage>
        <taxon>Eukaryota</taxon>
        <taxon>Fungi</taxon>
        <taxon>Dikarya</taxon>
        <taxon>Ascomycota</taxon>
        <taxon>Pezizomycotina</taxon>
        <taxon>Eurotiomycetes</taxon>
        <taxon>Eurotiomycetidae</taxon>
        <taxon>Eurotiales</taxon>
        <taxon>Aspergillaceae</taxon>
        <taxon>Aspergillus</taxon>
        <taxon>Aspergillus subgen. Circumdati</taxon>
    </lineage>
</organism>
<name>DBP9_ASPNC</name>
<keyword id="KW-0067">ATP-binding</keyword>
<keyword id="KW-0347">Helicase</keyword>
<keyword id="KW-0378">Hydrolase</keyword>
<keyword id="KW-0547">Nucleotide-binding</keyword>
<keyword id="KW-0539">Nucleus</keyword>
<keyword id="KW-1185">Reference proteome</keyword>
<keyword id="KW-0690">Ribosome biogenesis</keyword>
<keyword id="KW-0694">RNA-binding</keyword>
<keyword id="KW-0698">rRNA processing</keyword>
<evidence type="ECO:0000250" key="1"/>
<evidence type="ECO:0000255" key="2">
    <source>
        <dbReference type="PROSITE-ProRule" id="PRU00541"/>
    </source>
</evidence>
<evidence type="ECO:0000255" key="3">
    <source>
        <dbReference type="PROSITE-ProRule" id="PRU00542"/>
    </source>
</evidence>
<evidence type="ECO:0000256" key="4">
    <source>
        <dbReference type="SAM" id="MobiDB-lite"/>
    </source>
</evidence>
<evidence type="ECO:0000305" key="5"/>
<comment type="function">
    <text evidence="1">ATP-binding RNA helicase involved in the biogenesis of 60S ribosomal subunits and is required for the normal formation of 25S and 5.8S rRNAs.</text>
</comment>
<comment type="catalytic activity">
    <reaction>
        <text>ATP + H2O = ADP + phosphate + H(+)</text>
        <dbReference type="Rhea" id="RHEA:13065"/>
        <dbReference type="ChEBI" id="CHEBI:15377"/>
        <dbReference type="ChEBI" id="CHEBI:15378"/>
        <dbReference type="ChEBI" id="CHEBI:30616"/>
        <dbReference type="ChEBI" id="CHEBI:43474"/>
        <dbReference type="ChEBI" id="CHEBI:456216"/>
        <dbReference type="EC" id="3.6.4.13"/>
    </reaction>
</comment>
<comment type="subcellular location">
    <subcellularLocation>
        <location evidence="1">Nucleus</location>
        <location evidence="1">Nucleolus</location>
    </subcellularLocation>
</comment>
<comment type="domain">
    <text>The Q motif is unique to and characteristic of the DEAD box family of RNA helicases and controls ATP binding and hydrolysis.</text>
</comment>
<comment type="similarity">
    <text evidence="5">Belongs to the DEAD box helicase family. DDX56/DBP9 subfamily.</text>
</comment>
<gene>
    <name type="primary">dbp9</name>
    <name type="ORF">An02g04980</name>
</gene>
<protein>
    <recommendedName>
        <fullName>ATP-dependent RNA helicase dbp9</fullName>
        <ecNumber>3.6.4.13</ecNumber>
    </recommendedName>
</protein>
<dbReference type="EC" id="3.6.4.13"/>
<dbReference type="EMBL" id="AM270010">
    <property type="protein sequence ID" value="CAK37606.1"/>
    <property type="molecule type" value="Genomic_DNA"/>
</dbReference>
<dbReference type="RefSeq" id="XP_001399636.1">
    <property type="nucleotide sequence ID" value="XM_001399599.1"/>
</dbReference>
<dbReference type="SMR" id="A2QCW6"/>
<dbReference type="EnsemblFungi" id="CAK37606">
    <property type="protein sequence ID" value="CAK37606"/>
    <property type="gene ID" value="An02g04980"/>
</dbReference>
<dbReference type="GeneID" id="4978987"/>
<dbReference type="KEGG" id="ang:An02g04980"/>
<dbReference type="VEuPathDB" id="FungiDB:An02g04980"/>
<dbReference type="HOGENOM" id="CLU_003041_17_1_1"/>
<dbReference type="Proteomes" id="UP000006706">
    <property type="component" value="Chromosome 4R"/>
</dbReference>
<dbReference type="GO" id="GO:0005829">
    <property type="term" value="C:cytosol"/>
    <property type="evidence" value="ECO:0007669"/>
    <property type="project" value="TreeGrafter"/>
</dbReference>
<dbReference type="GO" id="GO:0005730">
    <property type="term" value="C:nucleolus"/>
    <property type="evidence" value="ECO:0007669"/>
    <property type="project" value="UniProtKB-SubCell"/>
</dbReference>
<dbReference type="GO" id="GO:0005524">
    <property type="term" value="F:ATP binding"/>
    <property type="evidence" value="ECO:0007669"/>
    <property type="project" value="UniProtKB-KW"/>
</dbReference>
<dbReference type="GO" id="GO:0016887">
    <property type="term" value="F:ATP hydrolysis activity"/>
    <property type="evidence" value="ECO:0007669"/>
    <property type="project" value="RHEA"/>
</dbReference>
<dbReference type="GO" id="GO:0003678">
    <property type="term" value="F:DNA helicase activity"/>
    <property type="evidence" value="ECO:0007669"/>
    <property type="project" value="EnsemblFungi"/>
</dbReference>
<dbReference type="GO" id="GO:0033677">
    <property type="term" value="F:DNA/RNA helicase activity"/>
    <property type="evidence" value="ECO:0007669"/>
    <property type="project" value="EnsemblFungi"/>
</dbReference>
<dbReference type="GO" id="GO:0003723">
    <property type="term" value="F:RNA binding"/>
    <property type="evidence" value="ECO:0007669"/>
    <property type="project" value="UniProtKB-KW"/>
</dbReference>
<dbReference type="GO" id="GO:0003724">
    <property type="term" value="F:RNA helicase activity"/>
    <property type="evidence" value="ECO:0007669"/>
    <property type="project" value="UniProtKB-EC"/>
</dbReference>
<dbReference type="GO" id="GO:0000463">
    <property type="term" value="P:maturation of LSU-rRNA from tricistronic rRNA transcript (SSU-rRNA, 5.8S rRNA, LSU-rRNA)"/>
    <property type="evidence" value="ECO:0007669"/>
    <property type="project" value="EnsemblFungi"/>
</dbReference>
<dbReference type="CDD" id="cd17961">
    <property type="entry name" value="DEADc_DDX56"/>
    <property type="match status" value="1"/>
</dbReference>
<dbReference type="CDD" id="cd18787">
    <property type="entry name" value="SF2_C_DEAD"/>
    <property type="match status" value="1"/>
</dbReference>
<dbReference type="Gene3D" id="3.40.50.300">
    <property type="entry name" value="P-loop containing nucleotide triphosphate hydrolases"/>
    <property type="match status" value="2"/>
</dbReference>
<dbReference type="InterPro" id="IPR011545">
    <property type="entry name" value="DEAD/DEAH_box_helicase_dom"/>
</dbReference>
<dbReference type="InterPro" id="IPR050079">
    <property type="entry name" value="DEAD_box_RNA_helicase"/>
</dbReference>
<dbReference type="InterPro" id="IPR014001">
    <property type="entry name" value="Helicase_ATP-bd"/>
</dbReference>
<dbReference type="InterPro" id="IPR001650">
    <property type="entry name" value="Helicase_C-like"/>
</dbReference>
<dbReference type="InterPro" id="IPR027417">
    <property type="entry name" value="P-loop_NTPase"/>
</dbReference>
<dbReference type="InterPro" id="IPR014014">
    <property type="entry name" value="RNA_helicase_DEAD_Q_motif"/>
</dbReference>
<dbReference type="PANTHER" id="PTHR47959">
    <property type="entry name" value="ATP-DEPENDENT RNA HELICASE RHLE-RELATED"/>
    <property type="match status" value="1"/>
</dbReference>
<dbReference type="PANTHER" id="PTHR47959:SF21">
    <property type="entry name" value="DEAD-BOX HELICASE 56"/>
    <property type="match status" value="1"/>
</dbReference>
<dbReference type="Pfam" id="PF00270">
    <property type="entry name" value="DEAD"/>
    <property type="match status" value="1"/>
</dbReference>
<dbReference type="Pfam" id="PF00271">
    <property type="entry name" value="Helicase_C"/>
    <property type="match status" value="2"/>
</dbReference>
<dbReference type="SMART" id="SM00487">
    <property type="entry name" value="DEXDc"/>
    <property type="match status" value="1"/>
</dbReference>
<dbReference type="SMART" id="SM00490">
    <property type="entry name" value="HELICc"/>
    <property type="match status" value="1"/>
</dbReference>
<dbReference type="SUPFAM" id="SSF52540">
    <property type="entry name" value="P-loop containing nucleoside triphosphate hydrolases"/>
    <property type="match status" value="2"/>
</dbReference>
<dbReference type="PROSITE" id="PS51192">
    <property type="entry name" value="HELICASE_ATP_BIND_1"/>
    <property type="match status" value="1"/>
</dbReference>
<dbReference type="PROSITE" id="PS51194">
    <property type="entry name" value="HELICASE_CTER"/>
    <property type="match status" value="1"/>
</dbReference>
<dbReference type="PROSITE" id="PS51195">
    <property type="entry name" value="Q_MOTIF"/>
    <property type="match status" value="1"/>
</dbReference>
<sequence>MKRKLDANDVPSPEVAETKETSDADEADFESLNLDPRLRQALIKEKFTKPTPVQAKAIPLALAGKDILARAKTGSGKTAAYVLPILQTILQKKAADPSLKATTGLILVPTRELAEQVQKVVTTFAAFCGKDVRSVNLTQKVSEAVQRTMLSDYPDIVISTPARVIANLGNSSLSLDNLTHLVIDEADLVLSYGYDEDINALSKAIPRGVQTFLMSATLTSEVDTLKGLFCRSPVVLKLEDKEEKGAGVSQFVVKCAEDEKFLLTYVIFKLQLIKGKVIIFVGDIDRCYRLKLFLEQFGVKSCVLNSELPVNSRIHVVQEFNKGVYDIIIAADDQEVLGSKSKKAKNAGADEEEEAAGVMGSSDDEEAEDDKKSNRPDKRRKLTAKEKDYGISRGIDFQNVACVLNFDLPTTAKSYTHRIGRTGRGGKTGMALSFVVPADQYGKHKPTSFPTAKHDEAVLAKIVKRQSKHGHEVKPYHFEMSQVDAFRYRMTDGLRAITRLAVQEARAREIRQELVKSEKLKRHFEDNPDELRQLRHDGELRSARIQPHLKHIPEYLMPSKGRKGISSEDVGFVGFRKSSDNRIRKARDKNRAKGKGRKPSGVRKVDPLKTFNRGRK</sequence>
<accession>A2QCW6</accession>
<proteinExistence type="inferred from homology"/>
<reference key="1">
    <citation type="journal article" date="2007" name="Nat. Biotechnol.">
        <title>Genome sequencing and analysis of the versatile cell factory Aspergillus niger CBS 513.88.</title>
        <authorList>
            <person name="Pel H.J."/>
            <person name="de Winde J.H."/>
            <person name="Archer D.B."/>
            <person name="Dyer P.S."/>
            <person name="Hofmann G."/>
            <person name="Schaap P.J."/>
            <person name="Turner G."/>
            <person name="de Vries R.P."/>
            <person name="Albang R."/>
            <person name="Albermann K."/>
            <person name="Andersen M.R."/>
            <person name="Bendtsen J.D."/>
            <person name="Benen J.A.E."/>
            <person name="van den Berg M."/>
            <person name="Breestraat S."/>
            <person name="Caddick M.X."/>
            <person name="Contreras R."/>
            <person name="Cornell M."/>
            <person name="Coutinho P.M."/>
            <person name="Danchin E.G.J."/>
            <person name="Debets A.J.M."/>
            <person name="Dekker P."/>
            <person name="van Dijck P.W.M."/>
            <person name="van Dijk A."/>
            <person name="Dijkhuizen L."/>
            <person name="Driessen A.J.M."/>
            <person name="d'Enfert C."/>
            <person name="Geysens S."/>
            <person name="Goosen C."/>
            <person name="Groot G.S.P."/>
            <person name="de Groot P.W.J."/>
            <person name="Guillemette T."/>
            <person name="Henrissat B."/>
            <person name="Herweijer M."/>
            <person name="van den Hombergh J.P.T.W."/>
            <person name="van den Hondel C.A.M.J.J."/>
            <person name="van der Heijden R.T.J.M."/>
            <person name="van der Kaaij R.M."/>
            <person name="Klis F.M."/>
            <person name="Kools H.J."/>
            <person name="Kubicek C.P."/>
            <person name="van Kuyk P.A."/>
            <person name="Lauber J."/>
            <person name="Lu X."/>
            <person name="van der Maarel M.J.E.C."/>
            <person name="Meulenberg R."/>
            <person name="Menke H."/>
            <person name="Mortimer M.A."/>
            <person name="Nielsen J."/>
            <person name="Oliver S.G."/>
            <person name="Olsthoorn M."/>
            <person name="Pal K."/>
            <person name="van Peij N.N.M.E."/>
            <person name="Ram A.F.J."/>
            <person name="Rinas U."/>
            <person name="Roubos J.A."/>
            <person name="Sagt C.M.J."/>
            <person name="Schmoll M."/>
            <person name="Sun J."/>
            <person name="Ussery D."/>
            <person name="Varga J."/>
            <person name="Vervecken W."/>
            <person name="van de Vondervoort P.J.J."/>
            <person name="Wedler H."/>
            <person name="Woesten H.A.B."/>
            <person name="Zeng A.-P."/>
            <person name="van Ooyen A.J.J."/>
            <person name="Visser J."/>
            <person name="Stam H."/>
        </authorList>
    </citation>
    <scope>NUCLEOTIDE SEQUENCE [LARGE SCALE GENOMIC DNA]</scope>
    <source>
        <strain>ATCC MYA-4892 / CBS 513.88 / FGSC A1513</strain>
    </source>
</reference>